<sequence length="253" mass="28171">MEKLLIVNADDFGLCKGQNYGIIDAFRNGVVSSTTAMMNSVDINHAAELSAQYPALPVGMHFVLTFGRPLTAMPSLTDANGELGKWLWQRAGAGTLDLNEIAQELECQFERFSAVFGRPPTHIDSHHHVHMLPQIYPLVAAFAREKSLPLRIDRHEVQQHGLTLDNPRSSEWFNAGFYGENLSEPSFLQLLEHADQQGVNSLEIMCHPAFIDQTLMTSGYCYPRLTELAILTSPTLKPAIAQRGYRLGSFLDC</sequence>
<protein>
    <recommendedName>
        <fullName evidence="1">Chitooligosaccharide deacetylase</fullName>
        <shortName evidence="1">COD</shortName>
        <ecNumber evidence="1">3.5.1.105</ecNumber>
    </recommendedName>
    <alternativeName>
        <fullName evidence="1">Chitin disaccharide deacetylase</fullName>
    </alternativeName>
    <alternativeName>
        <fullName evidence="1">Chitobiose deacetylase</fullName>
    </alternativeName>
    <alternativeName>
        <fullName evidence="1">Chitobiose-6P deacetylase</fullName>
    </alternativeName>
    <alternativeName>
        <fullName evidence="1">Chitotriose deacetylase</fullName>
    </alternativeName>
    <alternativeName>
        <fullName evidence="1">Chitotriose-6P deacetylase</fullName>
    </alternativeName>
</protein>
<reference key="1">
    <citation type="submission" date="2008-04" db="EMBL/GenBank/DDBJ databases">
        <title>Complete sequence of Yersinia pseudotuberculosis PB1/+.</title>
        <authorList>
            <person name="Copeland A."/>
            <person name="Lucas S."/>
            <person name="Lapidus A."/>
            <person name="Glavina del Rio T."/>
            <person name="Dalin E."/>
            <person name="Tice H."/>
            <person name="Bruce D."/>
            <person name="Goodwin L."/>
            <person name="Pitluck S."/>
            <person name="Munk A.C."/>
            <person name="Brettin T."/>
            <person name="Detter J.C."/>
            <person name="Han C."/>
            <person name="Tapia R."/>
            <person name="Schmutz J."/>
            <person name="Larimer F."/>
            <person name="Land M."/>
            <person name="Hauser L."/>
            <person name="Challacombe J.F."/>
            <person name="Green L."/>
            <person name="Lindler L.E."/>
            <person name="Nikolich M.P."/>
            <person name="Richardson P."/>
        </authorList>
    </citation>
    <scope>NUCLEOTIDE SEQUENCE [LARGE SCALE GENOMIC DNA]</scope>
    <source>
        <strain>PB1/+</strain>
    </source>
</reference>
<accession>B2KA89</accession>
<feature type="chain" id="PRO_1000139840" description="Chitooligosaccharide deacetylase">
    <location>
        <begin position="1"/>
        <end position="253"/>
    </location>
</feature>
<feature type="binding site" evidence="1">
    <location>
        <position position="61"/>
    </location>
    <ligand>
        <name>Mg(2+)</name>
        <dbReference type="ChEBI" id="CHEBI:18420"/>
    </ligand>
</feature>
<feature type="binding site" evidence="1">
    <location>
        <position position="126"/>
    </location>
    <ligand>
        <name>Mg(2+)</name>
        <dbReference type="ChEBI" id="CHEBI:18420"/>
    </ligand>
</feature>
<keyword id="KW-0119">Carbohydrate metabolism</keyword>
<keyword id="KW-0146">Chitin degradation</keyword>
<keyword id="KW-0963">Cytoplasm</keyword>
<keyword id="KW-0378">Hydrolase</keyword>
<keyword id="KW-0460">Magnesium</keyword>
<keyword id="KW-0479">Metal-binding</keyword>
<keyword id="KW-0624">Polysaccharide degradation</keyword>
<evidence type="ECO:0000255" key="1">
    <source>
        <dbReference type="HAMAP-Rule" id="MF_01246"/>
    </source>
</evidence>
<comment type="function">
    <text evidence="1">Involved in the degradation of chitin. ChbG is essential for growth on the acetylated chitooligosaccharides chitobiose and chitotriose but is dispensable for growth on cellobiose and chitosan dimer, the deacetylated form of chitobiose. Deacetylation of chitobiose-6-P and chitotriose-6-P is necessary for both the activation of the chb promoter by the regulatory protein ChbR and the hydrolysis of phosphorylated beta-glucosides by the phospho-beta-glucosidase ChbF. Catalyzes the removal of only one acetyl group from chitobiose-6-P to yield monoacetylchitobiose-6-P, the inducer of ChbR and the substrate of ChbF.</text>
</comment>
<comment type="catalytic activity">
    <reaction evidence="1">
        <text>N,N'-diacetylchitobiose + H2O = N-acetyl-beta-D-glucosaminyl-(1-&gt;4)-D-glucosamine + acetate</text>
        <dbReference type="Rhea" id="RHEA:27469"/>
        <dbReference type="ChEBI" id="CHEBI:15377"/>
        <dbReference type="ChEBI" id="CHEBI:28681"/>
        <dbReference type="ChEBI" id="CHEBI:30089"/>
        <dbReference type="ChEBI" id="CHEBI:59910"/>
        <dbReference type="EC" id="3.5.1.105"/>
    </reaction>
</comment>
<comment type="catalytic activity">
    <reaction evidence="1">
        <text>diacetylchitobiose-6'-phosphate + H2O = N'-monoacetylchitobiose-6'-phosphate + acetate</text>
        <dbReference type="Rhea" id="RHEA:35083"/>
        <dbReference type="ChEBI" id="CHEBI:15377"/>
        <dbReference type="ChEBI" id="CHEBI:30089"/>
        <dbReference type="ChEBI" id="CHEBI:64883"/>
        <dbReference type="ChEBI" id="CHEBI:71315"/>
    </reaction>
</comment>
<comment type="cofactor">
    <cofactor evidence="1">
        <name>Mg(2+)</name>
        <dbReference type="ChEBI" id="CHEBI:18420"/>
    </cofactor>
</comment>
<comment type="pathway">
    <text evidence="1">Glycan degradation; chitin degradation.</text>
</comment>
<comment type="subunit">
    <text evidence="1">Homodimer.</text>
</comment>
<comment type="subcellular location">
    <subcellularLocation>
        <location evidence="1">Cytoplasm</location>
    </subcellularLocation>
</comment>
<comment type="similarity">
    <text evidence="1">Belongs to the YdjC deacetylase family. ChbG subfamily.</text>
</comment>
<organism>
    <name type="scientific">Yersinia pseudotuberculosis serotype IB (strain PB1/+)</name>
    <dbReference type="NCBI Taxonomy" id="502801"/>
    <lineage>
        <taxon>Bacteria</taxon>
        <taxon>Pseudomonadati</taxon>
        <taxon>Pseudomonadota</taxon>
        <taxon>Gammaproteobacteria</taxon>
        <taxon>Enterobacterales</taxon>
        <taxon>Yersiniaceae</taxon>
        <taxon>Yersinia</taxon>
    </lineage>
</organism>
<dbReference type="EC" id="3.5.1.105" evidence="1"/>
<dbReference type="EMBL" id="CP001048">
    <property type="protein sequence ID" value="ACC90000.1"/>
    <property type="molecule type" value="Genomic_DNA"/>
</dbReference>
<dbReference type="RefSeq" id="WP_002212244.1">
    <property type="nucleotide sequence ID" value="NZ_CP009780.1"/>
</dbReference>
<dbReference type="SMR" id="B2KA89"/>
<dbReference type="GeneID" id="57976011"/>
<dbReference type="KEGG" id="ypb:YPTS_3043"/>
<dbReference type="PATRIC" id="fig|502801.10.peg.2474"/>
<dbReference type="UniPathway" id="UPA00349"/>
<dbReference type="GO" id="GO:0005737">
    <property type="term" value="C:cytoplasm"/>
    <property type="evidence" value="ECO:0007669"/>
    <property type="project" value="UniProtKB-SubCell"/>
</dbReference>
<dbReference type="GO" id="GO:0036311">
    <property type="term" value="F:chitin disaccharide deacetylase activity"/>
    <property type="evidence" value="ECO:0007669"/>
    <property type="project" value="UniProtKB-UniRule"/>
</dbReference>
<dbReference type="GO" id="GO:0019213">
    <property type="term" value="F:deacetylase activity"/>
    <property type="evidence" value="ECO:0007669"/>
    <property type="project" value="TreeGrafter"/>
</dbReference>
<dbReference type="GO" id="GO:0046872">
    <property type="term" value="F:metal ion binding"/>
    <property type="evidence" value="ECO:0007669"/>
    <property type="project" value="UniProtKB-KW"/>
</dbReference>
<dbReference type="GO" id="GO:0006032">
    <property type="term" value="P:chitin catabolic process"/>
    <property type="evidence" value="ECO:0007669"/>
    <property type="project" value="UniProtKB-UniPathway"/>
</dbReference>
<dbReference type="GO" id="GO:0052777">
    <property type="term" value="P:diacetylchitobiose catabolic process"/>
    <property type="evidence" value="ECO:0007669"/>
    <property type="project" value="UniProtKB-UniRule"/>
</dbReference>
<dbReference type="GO" id="GO:0000272">
    <property type="term" value="P:polysaccharide catabolic process"/>
    <property type="evidence" value="ECO:0007669"/>
    <property type="project" value="UniProtKB-UniRule"/>
</dbReference>
<dbReference type="CDD" id="cd10803">
    <property type="entry name" value="YdjC_EF3048_like"/>
    <property type="match status" value="1"/>
</dbReference>
<dbReference type="FunFam" id="3.20.20.370:FF:000001">
    <property type="entry name" value="Chitooligosaccharide deacetylase"/>
    <property type="match status" value="1"/>
</dbReference>
<dbReference type="Gene3D" id="3.20.20.370">
    <property type="entry name" value="Glycoside hydrolase/deacetylase"/>
    <property type="match status" value="1"/>
</dbReference>
<dbReference type="HAMAP" id="MF_01246">
    <property type="entry name" value="COD"/>
    <property type="match status" value="1"/>
</dbReference>
<dbReference type="InterPro" id="IPR022948">
    <property type="entry name" value="COD_ChbG_bac"/>
</dbReference>
<dbReference type="InterPro" id="IPR011330">
    <property type="entry name" value="Glyco_hydro/deAcase_b/a-brl"/>
</dbReference>
<dbReference type="InterPro" id="IPR006879">
    <property type="entry name" value="YdjC-like"/>
</dbReference>
<dbReference type="NCBIfam" id="NF002559">
    <property type="entry name" value="PRK02134.1"/>
    <property type="match status" value="1"/>
</dbReference>
<dbReference type="PANTHER" id="PTHR31609:SF1">
    <property type="entry name" value="CARBOHYDRATE DEACETYLASE"/>
    <property type="match status" value="1"/>
</dbReference>
<dbReference type="PANTHER" id="PTHR31609">
    <property type="entry name" value="YDJC DEACETYLASE FAMILY MEMBER"/>
    <property type="match status" value="1"/>
</dbReference>
<dbReference type="Pfam" id="PF04794">
    <property type="entry name" value="YdjC"/>
    <property type="match status" value="1"/>
</dbReference>
<dbReference type="SUPFAM" id="SSF88713">
    <property type="entry name" value="Glycoside hydrolase/deacetylase"/>
    <property type="match status" value="1"/>
</dbReference>
<proteinExistence type="inferred from homology"/>
<name>CHBG_YERPB</name>
<gene>
    <name evidence="1" type="primary">chbG</name>
    <name type="ordered locus">YPTS_3043</name>
</gene>